<dbReference type="EC" id="3.5.2.9" evidence="1"/>
<dbReference type="EMBL" id="CP001043">
    <property type="protein sequence ID" value="ACC72077.1"/>
    <property type="molecule type" value="Genomic_DNA"/>
</dbReference>
<dbReference type="RefSeq" id="WP_012402256.1">
    <property type="nucleotide sequence ID" value="NC_010622.1"/>
</dbReference>
<dbReference type="SMR" id="B2JIN1"/>
<dbReference type="STRING" id="391038.Bphy_2905"/>
<dbReference type="KEGG" id="bph:Bphy_2905"/>
<dbReference type="eggNOG" id="COG1540">
    <property type="taxonomic scope" value="Bacteria"/>
</dbReference>
<dbReference type="HOGENOM" id="CLU_069535_0_0_4"/>
<dbReference type="OrthoDB" id="9773478at2"/>
<dbReference type="Proteomes" id="UP000001192">
    <property type="component" value="Chromosome 1"/>
</dbReference>
<dbReference type="GO" id="GO:0017168">
    <property type="term" value="F:5-oxoprolinase (ATP-hydrolyzing) activity"/>
    <property type="evidence" value="ECO:0007669"/>
    <property type="project" value="UniProtKB-UniRule"/>
</dbReference>
<dbReference type="GO" id="GO:0005524">
    <property type="term" value="F:ATP binding"/>
    <property type="evidence" value="ECO:0007669"/>
    <property type="project" value="UniProtKB-UniRule"/>
</dbReference>
<dbReference type="GO" id="GO:0005975">
    <property type="term" value="P:carbohydrate metabolic process"/>
    <property type="evidence" value="ECO:0007669"/>
    <property type="project" value="InterPro"/>
</dbReference>
<dbReference type="CDD" id="cd10800">
    <property type="entry name" value="LamB_YcsF_YbgL_like"/>
    <property type="match status" value="1"/>
</dbReference>
<dbReference type="Gene3D" id="3.20.20.370">
    <property type="entry name" value="Glycoside hydrolase/deacetylase"/>
    <property type="match status" value="1"/>
</dbReference>
<dbReference type="HAMAP" id="MF_00691">
    <property type="entry name" value="PxpA"/>
    <property type="match status" value="1"/>
</dbReference>
<dbReference type="InterPro" id="IPR011330">
    <property type="entry name" value="Glyco_hydro/deAcase_b/a-brl"/>
</dbReference>
<dbReference type="InterPro" id="IPR005501">
    <property type="entry name" value="LamB/YcsF/PxpA-like"/>
</dbReference>
<dbReference type="NCBIfam" id="NF003814">
    <property type="entry name" value="PRK05406.1-3"/>
    <property type="match status" value="1"/>
</dbReference>
<dbReference type="NCBIfam" id="NF003815">
    <property type="entry name" value="PRK05406.1-4"/>
    <property type="match status" value="1"/>
</dbReference>
<dbReference type="NCBIfam" id="NF003816">
    <property type="entry name" value="PRK05406.1-5"/>
    <property type="match status" value="1"/>
</dbReference>
<dbReference type="PANTHER" id="PTHR30292:SF0">
    <property type="entry name" value="5-OXOPROLINASE SUBUNIT A"/>
    <property type="match status" value="1"/>
</dbReference>
<dbReference type="PANTHER" id="PTHR30292">
    <property type="entry name" value="UNCHARACTERIZED PROTEIN YBGL-RELATED"/>
    <property type="match status" value="1"/>
</dbReference>
<dbReference type="Pfam" id="PF03746">
    <property type="entry name" value="LamB_YcsF"/>
    <property type="match status" value="1"/>
</dbReference>
<dbReference type="SUPFAM" id="SSF88713">
    <property type="entry name" value="Glycoside hydrolase/deacetylase"/>
    <property type="match status" value="1"/>
</dbReference>
<accession>B2JIN1</accession>
<protein>
    <recommendedName>
        <fullName evidence="1">5-oxoprolinase subunit A</fullName>
        <shortName evidence="1">5-OPase subunit A</shortName>
        <ecNumber evidence="1">3.5.2.9</ecNumber>
    </recommendedName>
    <alternativeName>
        <fullName evidence="1">5-oxoprolinase (ATP-hydrolyzing) subunit A</fullName>
    </alternativeName>
</protein>
<comment type="function">
    <text evidence="1">Catalyzes the cleavage of 5-oxoproline to form L-glutamate coupled to the hydrolysis of ATP to ADP and inorganic phosphate.</text>
</comment>
<comment type="catalytic activity">
    <reaction evidence="1">
        <text>5-oxo-L-proline + ATP + 2 H2O = L-glutamate + ADP + phosphate + H(+)</text>
        <dbReference type="Rhea" id="RHEA:10348"/>
        <dbReference type="ChEBI" id="CHEBI:15377"/>
        <dbReference type="ChEBI" id="CHEBI:15378"/>
        <dbReference type="ChEBI" id="CHEBI:29985"/>
        <dbReference type="ChEBI" id="CHEBI:30616"/>
        <dbReference type="ChEBI" id="CHEBI:43474"/>
        <dbReference type="ChEBI" id="CHEBI:58402"/>
        <dbReference type="ChEBI" id="CHEBI:456216"/>
        <dbReference type="EC" id="3.5.2.9"/>
    </reaction>
</comment>
<comment type="subunit">
    <text evidence="1">Forms a complex composed of PxpA, PxpB and PxpC.</text>
</comment>
<comment type="similarity">
    <text evidence="1">Belongs to the LamB/PxpA family.</text>
</comment>
<sequence>MEIDLNADLGEGCGSDEALLDLVSSANIACGWHAGGPNAMRECVRWAVEKGVSIGAHPSFNDPENFGRKEMDLPAGEIYAGVLYQLGALSAIAQAEGGRIAHVKPHGALYNQAARDPKIADAIVSAVHDFDPSVAVFALANSGLVTAARNAGLVAIEEVFADRGYRADGSLVPRKEPGAMLDDEDEVLARTLTMVREQRVQALSGEWVPLNAQTICLHGDGPHALAFARRIRNALEAAGIGVHAANAVRV</sequence>
<reference key="1">
    <citation type="journal article" date="2014" name="Stand. Genomic Sci.">
        <title>Complete genome sequence of Burkholderia phymatum STM815(T), a broad host range and efficient nitrogen-fixing symbiont of Mimosa species.</title>
        <authorList>
            <person name="Moulin L."/>
            <person name="Klonowska A."/>
            <person name="Caroline B."/>
            <person name="Booth K."/>
            <person name="Vriezen J.A."/>
            <person name="Melkonian R."/>
            <person name="James E.K."/>
            <person name="Young J.P."/>
            <person name="Bena G."/>
            <person name="Hauser L."/>
            <person name="Land M."/>
            <person name="Kyrpides N."/>
            <person name="Bruce D."/>
            <person name="Chain P."/>
            <person name="Copeland A."/>
            <person name="Pitluck S."/>
            <person name="Woyke T."/>
            <person name="Lizotte-Waniewski M."/>
            <person name="Bristow J."/>
            <person name="Riley M."/>
        </authorList>
    </citation>
    <scope>NUCLEOTIDE SEQUENCE [LARGE SCALE GENOMIC DNA]</scope>
    <source>
        <strain>DSM 17167 / CIP 108236 / LMG 21445 / STM815</strain>
    </source>
</reference>
<feature type="chain" id="PRO_1000132045" description="5-oxoprolinase subunit A">
    <location>
        <begin position="1"/>
        <end position="250"/>
    </location>
</feature>
<proteinExistence type="inferred from homology"/>
<keyword id="KW-0067">ATP-binding</keyword>
<keyword id="KW-0378">Hydrolase</keyword>
<keyword id="KW-0547">Nucleotide-binding</keyword>
<keyword id="KW-1185">Reference proteome</keyword>
<name>PXPA_PARP8</name>
<organism>
    <name type="scientific">Paraburkholderia phymatum (strain DSM 17167 / CIP 108236 / LMG 21445 / STM815)</name>
    <name type="common">Burkholderia phymatum</name>
    <dbReference type="NCBI Taxonomy" id="391038"/>
    <lineage>
        <taxon>Bacteria</taxon>
        <taxon>Pseudomonadati</taxon>
        <taxon>Pseudomonadota</taxon>
        <taxon>Betaproteobacteria</taxon>
        <taxon>Burkholderiales</taxon>
        <taxon>Burkholderiaceae</taxon>
        <taxon>Paraburkholderia</taxon>
    </lineage>
</organism>
<evidence type="ECO:0000255" key="1">
    <source>
        <dbReference type="HAMAP-Rule" id="MF_00691"/>
    </source>
</evidence>
<gene>
    <name evidence="1" type="primary">pxpA</name>
    <name type="ordered locus">Bphy_2905</name>
</gene>